<accession>F8DNI1</accession>
<keyword id="KW-0131">Cell cycle</keyword>
<keyword id="KW-0132">Cell division</keyword>
<keyword id="KW-1003">Cell membrane</keyword>
<keyword id="KW-0472">Membrane</keyword>
<keyword id="KW-0812">Transmembrane</keyword>
<keyword id="KW-1133">Transmembrane helix</keyword>
<dbReference type="EMBL" id="CP002844">
    <property type="protein sequence ID" value="AEI58043.1"/>
    <property type="molecule type" value="Genomic_DNA"/>
</dbReference>
<dbReference type="RefSeq" id="WP_003671800.1">
    <property type="nucleotide sequence ID" value="NC_015697.1"/>
</dbReference>
<dbReference type="KEGG" id="lru:HMPREF0538_21834"/>
<dbReference type="HOGENOM" id="CLU_046278_0_1_9"/>
<dbReference type="Proteomes" id="UP000001924">
    <property type="component" value="Chromosome"/>
</dbReference>
<dbReference type="GO" id="GO:0032153">
    <property type="term" value="C:cell division site"/>
    <property type="evidence" value="ECO:0007669"/>
    <property type="project" value="UniProtKB-UniRule"/>
</dbReference>
<dbReference type="GO" id="GO:0005886">
    <property type="term" value="C:plasma membrane"/>
    <property type="evidence" value="ECO:0007669"/>
    <property type="project" value="UniProtKB-SubCell"/>
</dbReference>
<dbReference type="GO" id="GO:0043093">
    <property type="term" value="P:FtsZ-dependent cytokinesis"/>
    <property type="evidence" value="ECO:0007669"/>
    <property type="project" value="UniProtKB-UniRule"/>
</dbReference>
<dbReference type="Gene3D" id="3.40.50.10960">
    <property type="match status" value="1"/>
</dbReference>
<dbReference type="HAMAP" id="MF_00912">
    <property type="entry name" value="DivIB"/>
    <property type="match status" value="1"/>
</dbReference>
<dbReference type="InterPro" id="IPR026580">
    <property type="entry name" value="DivIB"/>
</dbReference>
<dbReference type="InterPro" id="IPR050487">
    <property type="entry name" value="FtsQ_DivIB"/>
</dbReference>
<dbReference type="InterPro" id="IPR034746">
    <property type="entry name" value="POTRA"/>
</dbReference>
<dbReference type="InterPro" id="IPR013685">
    <property type="entry name" value="POTRA_FtsQ_type"/>
</dbReference>
<dbReference type="PANTHER" id="PTHR37820">
    <property type="entry name" value="CELL DIVISION PROTEIN DIVIB"/>
    <property type="match status" value="1"/>
</dbReference>
<dbReference type="PANTHER" id="PTHR37820:SF1">
    <property type="entry name" value="CELL DIVISION PROTEIN FTSQ"/>
    <property type="match status" value="1"/>
</dbReference>
<dbReference type="Pfam" id="PF08478">
    <property type="entry name" value="POTRA_1"/>
    <property type="match status" value="1"/>
</dbReference>
<dbReference type="PROSITE" id="PS51779">
    <property type="entry name" value="POTRA"/>
    <property type="match status" value="1"/>
</dbReference>
<feature type="chain" id="PRO_0000414773" description="Cell division protein DivIB">
    <location>
        <begin position="1"/>
        <end position="282"/>
    </location>
</feature>
<feature type="topological domain" description="Cytoplasmic" evidence="1">
    <location>
        <begin position="1"/>
        <end position="59"/>
    </location>
</feature>
<feature type="transmembrane region" description="Helical" evidence="1">
    <location>
        <begin position="60"/>
        <end position="80"/>
    </location>
</feature>
<feature type="topological domain" description="Extracellular" evidence="1">
    <location>
        <begin position="81"/>
        <end position="282"/>
    </location>
</feature>
<feature type="domain" description="POTRA" evidence="2">
    <location>
        <begin position="82"/>
        <end position="153"/>
    </location>
</feature>
<feature type="region of interest" description="Disordered" evidence="3">
    <location>
        <begin position="19"/>
        <end position="41"/>
    </location>
</feature>
<feature type="compositionally biased region" description="Basic residues" evidence="3">
    <location>
        <begin position="31"/>
        <end position="41"/>
    </location>
</feature>
<gene>
    <name evidence="1" type="primary">divIB</name>
    <name type="synonym">ftsQ</name>
    <name type="ordered locus">HMPREF0538_21834</name>
</gene>
<proteinExistence type="inferred from homology"/>
<reference key="1">
    <citation type="submission" date="2011-06" db="EMBL/GenBank/DDBJ databases">
        <title>The complete genome of Lactobacillus reuteri ATCC 55730 / SD2112.</title>
        <authorList>
            <person name="Muzny D."/>
            <person name="Qin X."/>
            <person name="Buhay C."/>
            <person name="Dugan-Rocha S."/>
            <person name="Ding Y."/>
            <person name="Chen G."/>
            <person name="Hawes A."/>
            <person name="Holder M."/>
            <person name="Jhangiani S."/>
            <person name="Johnson A."/>
            <person name="Khan Z."/>
            <person name="Li Z."/>
            <person name="Liu W."/>
            <person name="Liu X."/>
            <person name="Perez L."/>
            <person name="Shen H."/>
            <person name="Wang Q."/>
            <person name="Watt J."/>
            <person name="Xi L."/>
            <person name="Xin Y."/>
            <person name="Zhou J."/>
            <person name="Deng J."/>
            <person name="Jiang H."/>
            <person name="Liu Y."/>
            <person name="Qu J."/>
            <person name="Song X.-Z."/>
            <person name="Zhang L."/>
            <person name="Villasana D."/>
            <person name="Johnson A."/>
            <person name="Liu J."/>
            <person name="Liyanage D."/>
            <person name="Lorensuhewa L."/>
            <person name="Robinson T."/>
            <person name="Song A."/>
            <person name="Song B.-B."/>
            <person name="Dinh H."/>
            <person name="Thornton R."/>
            <person name="Coyle M."/>
            <person name="Francisco L."/>
            <person name="Jackson L."/>
            <person name="Javaid M."/>
            <person name="Korchina V."/>
            <person name="Kovar C."/>
            <person name="Mata R."/>
            <person name="Mathew T."/>
            <person name="Ngo R."/>
            <person name="Nguyen L."/>
            <person name="Nguyen N."/>
            <person name="Okwuonu G."/>
            <person name="Ongeri F."/>
            <person name="Pham C."/>
            <person name="Simmons D."/>
            <person name="Wilczek-Boney K."/>
            <person name="Hale W."/>
            <person name="Jakkamsetti A."/>
            <person name="Pham P."/>
            <person name="Ruth R."/>
            <person name="San Lucas F."/>
            <person name="Warren J."/>
            <person name="Zhang J."/>
            <person name="Zhao Z."/>
            <person name="Zhou C."/>
            <person name="Zhu D."/>
            <person name="Lee S."/>
            <person name="Bess C."/>
            <person name="Blankenburg K."/>
            <person name="Forbes L."/>
            <person name="Fu Q."/>
            <person name="Gubbala S."/>
            <person name="Hirani K."/>
            <person name="Jayaseelan J.C."/>
            <person name="Lara F."/>
            <person name="Munidasa M."/>
            <person name="Palculict T."/>
            <person name="Patil S."/>
            <person name="Pu L.-L."/>
            <person name="Saada N."/>
            <person name="Tang L."/>
            <person name="Weissenberger G."/>
            <person name="Zhu Y."/>
            <person name="Hemphill L."/>
            <person name="Shang Y."/>
            <person name="Youmans B."/>
            <person name="Ayvaz T."/>
            <person name="Ross M."/>
            <person name="Santibanez J."/>
            <person name="Aqrawi P."/>
            <person name="Gross S."/>
            <person name="Joshi V."/>
            <person name="Fowler G."/>
            <person name="Nazareth L."/>
            <person name="Reid J."/>
            <person name="Worley K."/>
            <person name="Petrosino J."/>
            <person name="Highlander S."/>
            <person name="Gibbs R."/>
        </authorList>
    </citation>
    <scope>NUCLEOTIDE SEQUENCE [LARGE SCALE GENOMIC DNA]</scope>
    <source>
        <strain>ATCC 55730 / SD2112</strain>
    </source>
</reference>
<protein>
    <recommendedName>
        <fullName evidence="1">Cell division protein DivIB</fullName>
    </recommendedName>
</protein>
<comment type="function">
    <text evidence="1">Cell division protein that may be involved in stabilizing or promoting the assembly of the division complex.</text>
</comment>
<comment type="subcellular location">
    <subcellularLocation>
        <location evidence="1">Cell membrane</location>
        <topology evidence="1">Single-pass type II membrane protein</topology>
    </subcellularLocation>
    <text evidence="1">Localizes to the division septum.</text>
</comment>
<comment type="similarity">
    <text evidence="1">Belongs to the FtsQ/DivIB family. DivIB subfamily.</text>
</comment>
<sequence length="282" mass="31819">MLDDRSAIEHHKYSQRLTELERRSAAAQQRQQKKKPPKMHVGNKIRGIKIKRYVSNGERVLKLVVLFSAILLFMLYIISPLSKITTLHVTGNHDLTKEQVEKNANIYPGRFIWGVYLARHQLTKQAIRKNPQIKDLRIKVTGPQSLQISVKENALLGIAVMNNDTYAVLADGQLQRTKNADNGIAYKRFDGHKKVLATTAAQLGKLKLAIRNGISSVSYQPTKEYPDRVIIYMRDGNTVYGDLNTIGDKMGYYPAIAASMKNKGIIDLQVGAYSYDYGSKDK</sequence>
<organism>
    <name type="scientific">Limosilactobacillus reuteri (strain ATCC 55730 / SD2112)</name>
    <name type="common">Lactobacillus reuteri</name>
    <dbReference type="NCBI Taxonomy" id="491077"/>
    <lineage>
        <taxon>Bacteria</taxon>
        <taxon>Bacillati</taxon>
        <taxon>Bacillota</taxon>
        <taxon>Bacilli</taxon>
        <taxon>Lactobacillales</taxon>
        <taxon>Lactobacillaceae</taxon>
        <taxon>Limosilactobacillus</taxon>
    </lineage>
</organism>
<name>DIVIB_LIMRS</name>
<evidence type="ECO:0000255" key="1">
    <source>
        <dbReference type="HAMAP-Rule" id="MF_00912"/>
    </source>
</evidence>
<evidence type="ECO:0000255" key="2">
    <source>
        <dbReference type="PROSITE-ProRule" id="PRU01115"/>
    </source>
</evidence>
<evidence type="ECO:0000256" key="3">
    <source>
        <dbReference type="SAM" id="MobiDB-lite"/>
    </source>
</evidence>